<dbReference type="EMBL" id="U18839">
    <property type="status" value="NOT_ANNOTATED_CDS"/>
    <property type="molecule type" value="Genomic_DNA"/>
</dbReference>
<dbReference type="EMBL" id="AF479921">
    <property type="protein sequence ID" value="AAL79234.1"/>
    <property type="molecule type" value="Genomic_DNA"/>
</dbReference>
<dbReference type="STRING" id="4932.YER088W-B"/>
<dbReference type="PaxDb" id="4932-YER088W-B"/>
<dbReference type="TopDownProteomics" id="Q8TGR4"/>
<dbReference type="EnsemblFungi" id="YER088W-B_mRNA">
    <property type="protein sequence ID" value="YER088W-B"/>
    <property type="gene ID" value="YER088W-B"/>
</dbReference>
<dbReference type="AGR" id="SGD:S000028623"/>
<dbReference type="SGD" id="S000028623">
    <property type="gene designation" value="YER088W-B"/>
</dbReference>
<dbReference type="HOGENOM" id="CLU_3160300_0_0_1"/>
<sequence length="48" mass="5208">MKDGRSFIASGNGRPCGQCYCHSRDGRKPGHGPWFGAVGPRQTGEECR</sequence>
<gene>
    <name type="ordered locus">YER088W-B</name>
    <name type="ORF">YER088W-A</name>
</gene>
<protein>
    <recommendedName>
        <fullName>Putative uncharacterized protein YER088W-B</fullName>
    </recommendedName>
</protein>
<evidence type="ECO:0000305" key="1"/>
<evidence type="ECO:0000305" key="2">
    <source>
    </source>
</evidence>
<name>YE088_YEAST</name>
<feature type="chain" id="PRO_0000299658" description="Putative uncharacterized protein YER088W-B">
    <location>
        <begin position="1"/>
        <end position="48"/>
    </location>
</feature>
<proteinExistence type="uncertain"/>
<reference key="1">
    <citation type="journal article" date="1997" name="Nature">
        <title>The nucleotide sequence of Saccharomyces cerevisiae chromosome V.</title>
        <authorList>
            <person name="Dietrich F.S."/>
            <person name="Mulligan J.T."/>
            <person name="Hennessy K.M."/>
            <person name="Yelton M.A."/>
            <person name="Allen E."/>
            <person name="Araujo R."/>
            <person name="Aviles E."/>
            <person name="Berno A."/>
            <person name="Brennan T."/>
            <person name="Carpenter J."/>
            <person name="Chen E."/>
            <person name="Cherry J.M."/>
            <person name="Chung E."/>
            <person name="Duncan M."/>
            <person name="Guzman E."/>
            <person name="Hartzell G."/>
            <person name="Hunicke-Smith S."/>
            <person name="Hyman R.W."/>
            <person name="Kayser A."/>
            <person name="Komp C."/>
            <person name="Lashkari D."/>
            <person name="Lew H."/>
            <person name="Lin D."/>
            <person name="Mosedale D."/>
            <person name="Nakahara K."/>
            <person name="Namath A."/>
            <person name="Norgren R."/>
            <person name="Oefner P."/>
            <person name="Oh C."/>
            <person name="Petel F.X."/>
            <person name="Roberts D."/>
            <person name="Sehl P."/>
            <person name="Schramm S."/>
            <person name="Shogren T."/>
            <person name="Smith V."/>
            <person name="Taylor P."/>
            <person name="Wei Y."/>
            <person name="Botstein D."/>
            <person name="Davis R.W."/>
        </authorList>
    </citation>
    <scope>NUCLEOTIDE SEQUENCE [LARGE SCALE GENOMIC DNA]</scope>
    <source>
        <strain>ATCC 204508 / S288c</strain>
    </source>
</reference>
<reference key="2">
    <citation type="journal article" date="2014" name="G3 (Bethesda)">
        <title>The reference genome sequence of Saccharomyces cerevisiae: Then and now.</title>
        <authorList>
            <person name="Engel S.R."/>
            <person name="Dietrich F.S."/>
            <person name="Fisk D.G."/>
            <person name="Binkley G."/>
            <person name="Balakrishnan R."/>
            <person name="Costanzo M.C."/>
            <person name="Dwight S.S."/>
            <person name="Hitz B.C."/>
            <person name="Karra K."/>
            <person name="Nash R.S."/>
            <person name="Weng S."/>
            <person name="Wong E.D."/>
            <person name="Lloyd P."/>
            <person name="Skrzypek M.S."/>
            <person name="Miyasato S.R."/>
            <person name="Simison M."/>
            <person name="Cherry J.M."/>
        </authorList>
    </citation>
    <scope>GENOME REANNOTATION</scope>
    <source>
        <strain>ATCC 204508 / S288c</strain>
    </source>
</reference>
<reference key="3">
    <citation type="journal article" date="2002" name="Nat. Biotechnol.">
        <title>An integrated approach for finding overlooked genes in yeast.</title>
        <authorList>
            <person name="Kumar A."/>
            <person name="Harrison P.M."/>
            <person name="Cheung K.-H."/>
            <person name="Lan N."/>
            <person name="Echols N."/>
            <person name="Bertone P."/>
            <person name="Miller P."/>
            <person name="Gerstein M.B."/>
            <person name="Snyder M."/>
        </authorList>
    </citation>
    <scope>NUCLEOTIDE SEQUENCE [GENOMIC DNA]</scope>
</reference>
<comment type="miscellaneous">
    <text evidence="1">Partially overlaps PTC2.</text>
</comment>
<comment type="caution">
    <text evidence="2">Product of a dubious gene prediction unlikely to encode a functional protein. Because of that it is not part of the S.cerevisiae S288c complete/reference proteome set.</text>
</comment>
<accession>Q8TGR4</accession>
<organism>
    <name type="scientific">Saccharomyces cerevisiae (strain ATCC 204508 / S288c)</name>
    <name type="common">Baker's yeast</name>
    <dbReference type="NCBI Taxonomy" id="559292"/>
    <lineage>
        <taxon>Eukaryota</taxon>
        <taxon>Fungi</taxon>
        <taxon>Dikarya</taxon>
        <taxon>Ascomycota</taxon>
        <taxon>Saccharomycotina</taxon>
        <taxon>Saccharomycetes</taxon>
        <taxon>Saccharomycetales</taxon>
        <taxon>Saccharomycetaceae</taxon>
        <taxon>Saccharomyces</taxon>
    </lineage>
</organism>